<protein>
    <recommendedName>
        <fullName evidence="1">Small ribosomal subunit protein uS14</fullName>
    </recommendedName>
    <alternativeName>
        <fullName evidence="2">30S ribosomal protein S14</fullName>
    </alternativeName>
</protein>
<accession>A8G1D5</accession>
<reference key="1">
    <citation type="submission" date="2007-08" db="EMBL/GenBank/DDBJ databases">
        <title>Complete sequence of Shewanella sediminis HAW-EB3.</title>
        <authorList>
            <consortium name="US DOE Joint Genome Institute"/>
            <person name="Copeland A."/>
            <person name="Lucas S."/>
            <person name="Lapidus A."/>
            <person name="Barry K."/>
            <person name="Glavina del Rio T."/>
            <person name="Dalin E."/>
            <person name="Tice H."/>
            <person name="Pitluck S."/>
            <person name="Chertkov O."/>
            <person name="Brettin T."/>
            <person name="Bruce D."/>
            <person name="Detter J.C."/>
            <person name="Han C."/>
            <person name="Schmutz J."/>
            <person name="Larimer F."/>
            <person name="Land M."/>
            <person name="Hauser L."/>
            <person name="Kyrpides N."/>
            <person name="Kim E."/>
            <person name="Zhao J.-S."/>
            <person name="Richardson P."/>
        </authorList>
    </citation>
    <scope>NUCLEOTIDE SEQUENCE [LARGE SCALE GENOMIC DNA]</scope>
    <source>
        <strain>HAW-EB3</strain>
    </source>
</reference>
<sequence length="101" mass="11435">MAKSSMKAREAKRAKLVAKFAEKRLALKAIINNPTTSDEDRWDAVLKLQGLPRDSSAARQRNRCSQTGRPHGYLRKFGLSRIKLREATMRGEVPGLRKASW</sequence>
<keyword id="KW-1185">Reference proteome</keyword>
<keyword id="KW-0687">Ribonucleoprotein</keyword>
<keyword id="KW-0689">Ribosomal protein</keyword>
<keyword id="KW-0694">RNA-binding</keyword>
<keyword id="KW-0699">rRNA-binding</keyword>
<gene>
    <name evidence="1" type="primary">rpsN</name>
    <name type="ordered locus">Ssed_4304</name>
</gene>
<name>RS14_SHESH</name>
<comment type="function">
    <text evidence="1">Binds 16S rRNA, required for the assembly of 30S particles and may also be responsible for determining the conformation of the 16S rRNA at the A site.</text>
</comment>
<comment type="subunit">
    <text evidence="1">Part of the 30S ribosomal subunit. Contacts proteins S3 and S10.</text>
</comment>
<comment type="similarity">
    <text evidence="1">Belongs to the universal ribosomal protein uS14 family.</text>
</comment>
<feature type="chain" id="PRO_1000128582" description="Small ribosomal subunit protein uS14">
    <location>
        <begin position="1"/>
        <end position="101"/>
    </location>
</feature>
<proteinExistence type="inferred from homology"/>
<evidence type="ECO:0000255" key="1">
    <source>
        <dbReference type="HAMAP-Rule" id="MF_00537"/>
    </source>
</evidence>
<evidence type="ECO:0000305" key="2"/>
<organism>
    <name type="scientific">Shewanella sediminis (strain HAW-EB3)</name>
    <dbReference type="NCBI Taxonomy" id="425104"/>
    <lineage>
        <taxon>Bacteria</taxon>
        <taxon>Pseudomonadati</taxon>
        <taxon>Pseudomonadota</taxon>
        <taxon>Gammaproteobacteria</taxon>
        <taxon>Alteromonadales</taxon>
        <taxon>Shewanellaceae</taxon>
        <taxon>Shewanella</taxon>
    </lineage>
</organism>
<dbReference type="EMBL" id="CP000821">
    <property type="protein sequence ID" value="ABV38908.1"/>
    <property type="molecule type" value="Genomic_DNA"/>
</dbReference>
<dbReference type="RefSeq" id="WP_012144637.1">
    <property type="nucleotide sequence ID" value="NC_009831.1"/>
</dbReference>
<dbReference type="SMR" id="A8G1D5"/>
<dbReference type="STRING" id="425104.Ssed_4304"/>
<dbReference type="KEGG" id="sse:Ssed_4304"/>
<dbReference type="eggNOG" id="COG0199">
    <property type="taxonomic scope" value="Bacteria"/>
</dbReference>
<dbReference type="HOGENOM" id="CLU_139869_0_1_6"/>
<dbReference type="OrthoDB" id="9810484at2"/>
<dbReference type="Proteomes" id="UP000002015">
    <property type="component" value="Chromosome"/>
</dbReference>
<dbReference type="GO" id="GO:0005737">
    <property type="term" value="C:cytoplasm"/>
    <property type="evidence" value="ECO:0007669"/>
    <property type="project" value="UniProtKB-ARBA"/>
</dbReference>
<dbReference type="GO" id="GO:0015935">
    <property type="term" value="C:small ribosomal subunit"/>
    <property type="evidence" value="ECO:0007669"/>
    <property type="project" value="TreeGrafter"/>
</dbReference>
<dbReference type="GO" id="GO:0019843">
    <property type="term" value="F:rRNA binding"/>
    <property type="evidence" value="ECO:0007669"/>
    <property type="project" value="UniProtKB-UniRule"/>
</dbReference>
<dbReference type="GO" id="GO:0003735">
    <property type="term" value="F:structural constituent of ribosome"/>
    <property type="evidence" value="ECO:0007669"/>
    <property type="project" value="InterPro"/>
</dbReference>
<dbReference type="GO" id="GO:0006412">
    <property type="term" value="P:translation"/>
    <property type="evidence" value="ECO:0007669"/>
    <property type="project" value="UniProtKB-UniRule"/>
</dbReference>
<dbReference type="FunFam" id="1.10.287.1480:FF:000001">
    <property type="entry name" value="30S ribosomal protein S14"/>
    <property type="match status" value="1"/>
</dbReference>
<dbReference type="Gene3D" id="1.10.287.1480">
    <property type="match status" value="1"/>
</dbReference>
<dbReference type="HAMAP" id="MF_00537">
    <property type="entry name" value="Ribosomal_uS14_1"/>
    <property type="match status" value="1"/>
</dbReference>
<dbReference type="InterPro" id="IPR001209">
    <property type="entry name" value="Ribosomal_uS14"/>
</dbReference>
<dbReference type="InterPro" id="IPR023036">
    <property type="entry name" value="Ribosomal_uS14_bac/plastid"/>
</dbReference>
<dbReference type="InterPro" id="IPR018271">
    <property type="entry name" value="Ribosomal_uS14_CS"/>
</dbReference>
<dbReference type="NCBIfam" id="NF006477">
    <property type="entry name" value="PRK08881.1"/>
    <property type="match status" value="1"/>
</dbReference>
<dbReference type="PANTHER" id="PTHR19836">
    <property type="entry name" value="30S RIBOSOMAL PROTEIN S14"/>
    <property type="match status" value="1"/>
</dbReference>
<dbReference type="PANTHER" id="PTHR19836:SF19">
    <property type="entry name" value="SMALL RIBOSOMAL SUBUNIT PROTEIN US14M"/>
    <property type="match status" value="1"/>
</dbReference>
<dbReference type="Pfam" id="PF00253">
    <property type="entry name" value="Ribosomal_S14"/>
    <property type="match status" value="1"/>
</dbReference>
<dbReference type="SUPFAM" id="SSF57716">
    <property type="entry name" value="Glucocorticoid receptor-like (DNA-binding domain)"/>
    <property type="match status" value="1"/>
</dbReference>
<dbReference type="PROSITE" id="PS00527">
    <property type="entry name" value="RIBOSOMAL_S14"/>
    <property type="match status" value="1"/>
</dbReference>